<accession>B1KX63</accession>
<comment type="function">
    <text evidence="1">Promotes RNA polymerase assembly. Latches the N- and C-terminal regions of the beta' subunit thereby facilitating its interaction with the beta and alpha subunits.</text>
</comment>
<comment type="catalytic activity">
    <reaction evidence="1">
        <text>RNA(n) + a ribonucleoside 5'-triphosphate = RNA(n+1) + diphosphate</text>
        <dbReference type="Rhea" id="RHEA:21248"/>
        <dbReference type="Rhea" id="RHEA-COMP:14527"/>
        <dbReference type="Rhea" id="RHEA-COMP:17342"/>
        <dbReference type="ChEBI" id="CHEBI:33019"/>
        <dbReference type="ChEBI" id="CHEBI:61557"/>
        <dbReference type="ChEBI" id="CHEBI:140395"/>
        <dbReference type="EC" id="2.7.7.6"/>
    </reaction>
</comment>
<comment type="subunit">
    <text evidence="1">The RNAP catalytic core consists of 2 alpha, 1 beta, 1 beta' and 1 omega subunit. When a sigma factor is associated with the core the holoenzyme is formed, which can initiate transcription.</text>
</comment>
<comment type="similarity">
    <text evidence="1">Belongs to the RNA polymerase subunit omega family.</text>
</comment>
<sequence length="72" mass="8003">MSNSMINPSIVNLLEKVDDRYSLVTITSKRSRQLIDGAKSLVDIDSTKPVTVAINEIHEGKITYKTVKEGIK</sequence>
<reference key="1">
    <citation type="journal article" date="2007" name="PLoS ONE">
        <title>Analysis of the neurotoxin complex genes in Clostridium botulinum A1-A4 and B1 strains: BoNT/A3, /Ba4 and /B1 clusters are located within plasmids.</title>
        <authorList>
            <person name="Smith T.J."/>
            <person name="Hill K.K."/>
            <person name="Foley B.T."/>
            <person name="Detter J.C."/>
            <person name="Munk A.C."/>
            <person name="Bruce D.C."/>
            <person name="Doggett N.A."/>
            <person name="Smith L.A."/>
            <person name="Marks J.D."/>
            <person name="Xie G."/>
            <person name="Brettin T.S."/>
        </authorList>
    </citation>
    <scope>NUCLEOTIDE SEQUENCE [LARGE SCALE GENOMIC DNA]</scope>
    <source>
        <strain>Loch Maree / Type A3</strain>
    </source>
</reference>
<name>RPOZ_CLOBM</name>
<evidence type="ECO:0000255" key="1">
    <source>
        <dbReference type="HAMAP-Rule" id="MF_00366"/>
    </source>
</evidence>
<proteinExistence type="inferred from homology"/>
<protein>
    <recommendedName>
        <fullName evidence="1">DNA-directed RNA polymerase subunit omega</fullName>
        <shortName evidence="1">RNAP omega subunit</shortName>
        <ecNumber evidence="1">2.7.7.6</ecNumber>
    </recommendedName>
    <alternativeName>
        <fullName evidence="1">RNA polymerase omega subunit</fullName>
    </alternativeName>
    <alternativeName>
        <fullName evidence="1">Transcriptase subunit omega</fullName>
    </alternativeName>
</protein>
<dbReference type="EC" id="2.7.7.6" evidence="1"/>
<dbReference type="EMBL" id="CP000962">
    <property type="protein sequence ID" value="ACA54797.1"/>
    <property type="molecule type" value="Genomic_DNA"/>
</dbReference>
<dbReference type="RefSeq" id="WP_012342854.1">
    <property type="nucleotide sequence ID" value="NC_010520.1"/>
</dbReference>
<dbReference type="SMR" id="B1KX63"/>
<dbReference type="KEGG" id="cbl:CLK_1895"/>
<dbReference type="HOGENOM" id="CLU_125406_6_1_9"/>
<dbReference type="GO" id="GO:0000428">
    <property type="term" value="C:DNA-directed RNA polymerase complex"/>
    <property type="evidence" value="ECO:0007669"/>
    <property type="project" value="UniProtKB-KW"/>
</dbReference>
<dbReference type="GO" id="GO:0003677">
    <property type="term" value="F:DNA binding"/>
    <property type="evidence" value="ECO:0007669"/>
    <property type="project" value="UniProtKB-UniRule"/>
</dbReference>
<dbReference type="GO" id="GO:0003899">
    <property type="term" value="F:DNA-directed RNA polymerase activity"/>
    <property type="evidence" value="ECO:0007669"/>
    <property type="project" value="UniProtKB-UniRule"/>
</dbReference>
<dbReference type="GO" id="GO:0006351">
    <property type="term" value="P:DNA-templated transcription"/>
    <property type="evidence" value="ECO:0007669"/>
    <property type="project" value="UniProtKB-UniRule"/>
</dbReference>
<dbReference type="Gene3D" id="3.90.940.10">
    <property type="match status" value="1"/>
</dbReference>
<dbReference type="HAMAP" id="MF_00366">
    <property type="entry name" value="RNApol_bact_RpoZ"/>
    <property type="match status" value="1"/>
</dbReference>
<dbReference type="InterPro" id="IPR003716">
    <property type="entry name" value="DNA-dir_RNA_pol_omega"/>
</dbReference>
<dbReference type="InterPro" id="IPR006110">
    <property type="entry name" value="Pol_omega/Rpo6/RPB6"/>
</dbReference>
<dbReference type="InterPro" id="IPR036161">
    <property type="entry name" value="RPB6/omega-like_sf"/>
</dbReference>
<dbReference type="NCBIfam" id="TIGR00690">
    <property type="entry name" value="rpoZ"/>
    <property type="match status" value="1"/>
</dbReference>
<dbReference type="PANTHER" id="PTHR34476">
    <property type="entry name" value="DNA-DIRECTED RNA POLYMERASE SUBUNIT OMEGA"/>
    <property type="match status" value="1"/>
</dbReference>
<dbReference type="PANTHER" id="PTHR34476:SF1">
    <property type="entry name" value="DNA-DIRECTED RNA POLYMERASE SUBUNIT OMEGA"/>
    <property type="match status" value="1"/>
</dbReference>
<dbReference type="Pfam" id="PF01192">
    <property type="entry name" value="RNA_pol_Rpb6"/>
    <property type="match status" value="1"/>
</dbReference>
<dbReference type="SMART" id="SM01409">
    <property type="entry name" value="RNA_pol_Rpb6"/>
    <property type="match status" value="1"/>
</dbReference>
<dbReference type="SUPFAM" id="SSF63562">
    <property type="entry name" value="RPB6/omega subunit-like"/>
    <property type="match status" value="1"/>
</dbReference>
<keyword id="KW-0240">DNA-directed RNA polymerase</keyword>
<keyword id="KW-0548">Nucleotidyltransferase</keyword>
<keyword id="KW-0804">Transcription</keyword>
<keyword id="KW-0808">Transferase</keyword>
<feature type="chain" id="PRO_1000121204" description="DNA-directed RNA polymerase subunit omega">
    <location>
        <begin position="1"/>
        <end position="72"/>
    </location>
</feature>
<organism>
    <name type="scientific">Clostridium botulinum (strain Loch Maree / Type A3)</name>
    <dbReference type="NCBI Taxonomy" id="498214"/>
    <lineage>
        <taxon>Bacteria</taxon>
        <taxon>Bacillati</taxon>
        <taxon>Bacillota</taxon>
        <taxon>Clostridia</taxon>
        <taxon>Eubacteriales</taxon>
        <taxon>Clostridiaceae</taxon>
        <taxon>Clostridium</taxon>
    </lineage>
</organism>
<gene>
    <name evidence="1" type="primary">rpoZ</name>
    <name type="ordered locus">CLK_1895</name>
</gene>